<sequence length="127" mass="14156">MLSRKAVAALLLVHVTAMLASQTEGFVPIFTYSELRRTQEREQNKRLRKSLRVQQRSKAAGRLEPQEVMEEEENGVIKLTAPVEIGVGLSSRQLEKHRAVLEALLSEALPPPSLVFGGQRPVTAAWE</sequence>
<reference key="1">
    <citation type="journal article" date="2001" name="FEBS Lett.">
        <title>Identification and expression of the motilin precursor in the guinea pig.</title>
        <authorList>
            <person name="Xu L."/>
            <person name="Depoortere I."/>
            <person name="Tang M."/>
            <person name="Peeters T.L."/>
        </authorList>
    </citation>
    <scope>NUCLEOTIDE SEQUENCE [MRNA]</scope>
    <source>
        <tissue>Intestine</tissue>
    </source>
</reference>
<comment type="function">
    <text evidence="1">Plays an important role in the regulation of interdigestive gastrointestinal motility and indirectly causes rhythmic contraction of duodenal and colonic smooth muscle.</text>
</comment>
<comment type="subcellular location">
    <subcellularLocation>
        <location>Secreted</location>
    </subcellularLocation>
</comment>
<comment type="tissue specificity">
    <text>Present in the gut mucosa with the exception of the gastric corpus. Also present in medulla oblongata, nucleus of the solitary tract, hypophysis, spinal cord, hypothalamus, and cerebellum but not in the cerebral cortex.</text>
</comment>
<comment type="similarity">
    <text evidence="4">Belongs to the motilin family.</text>
</comment>
<dbReference type="EMBL" id="AF323752">
    <property type="protein sequence ID" value="AAK07442.1"/>
    <property type="molecule type" value="mRNA"/>
</dbReference>
<dbReference type="RefSeq" id="NP_001166331.1">
    <property type="nucleotide sequence ID" value="NM_001172860.1"/>
</dbReference>
<dbReference type="STRING" id="10141.ENSCPOP00000007154"/>
<dbReference type="GeneID" id="100379560"/>
<dbReference type="CTD" id="4295"/>
<dbReference type="InParanoid" id="Q99MP5"/>
<dbReference type="OrthoDB" id="9937685at2759"/>
<dbReference type="Proteomes" id="UP000005447">
    <property type="component" value="Unassembled WGS sequence"/>
</dbReference>
<dbReference type="GO" id="GO:0005576">
    <property type="term" value="C:extracellular region"/>
    <property type="evidence" value="ECO:0007669"/>
    <property type="project" value="UniProtKB-SubCell"/>
</dbReference>
<dbReference type="GO" id="GO:0005179">
    <property type="term" value="F:hormone activity"/>
    <property type="evidence" value="ECO:0007669"/>
    <property type="project" value="UniProtKB-KW"/>
</dbReference>
<dbReference type="GO" id="GO:0031788">
    <property type="term" value="F:motilin receptor binding"/>
    <property type="evidence" value="ECO:0007669"/>
    <property type="project" value="TreeGrafter"/>
</dbReference>
<dbReference type="InterPro" id="IPR006737">
    <property type="entry name" value="Motilin_assoc"/>
</dbReference>
<dbReference type="InterPro" id="IPR006738">
    <property type="entry name" value="Motilin_ghrelin"/>
</dbReference>
<dbReference type="InterPro" id="IPR015662">
    <property type="entry name" value="Promotilin"/>
</dbReference>
<dbReference type="PANTHER" id="PTHR14156">
    <property type="entry name" value="MOTILIN"/>
    <property type="match status" value="1"/>
</dbReference>
<dbReference type="PANTHER" id="PTHR14156:SF0">
    <property type="entry name" value="PROMOTILIN"/>
    <property type="match status" value="1"/>
</dbReference>
<dbReference type="Pfam" id="PF04643">
    <property type="entry name" value="Motilin_assoc"/>
    <property type="match status" value="1"/>
</dbReference>
<dbReference type="Pfam" id="PF04644">
    <property type="entry name" value="Motilin_ghrelin"/>
    <property type="match status" value="1"/>
</dbReference>
<evidence type="ECO:0000250" key="1"/>
<evidence type="ECO:0000255" key="2"/>
<evidence type="ECO:0000256" key="3">
    <source>
        <dbReference type="SAM" id="MobiDB-lite"/>
    </source>
</evidence>
<evidence type="ECO:0000305" key="4"/>
<accession>Q99MP5</accession>
<protein>
    <recommendedName>
        <fullName>Promotilin</fullName>
    </recommendedName>
    <component>
        <recommendedName>
            <fullName>Motilin</fullName>
        </recommendedName>
    </component>
    <component>
        <recommendedName>
            <fullName>Motilin-associated peptide</fullName>
            <shortName>MAP</shortName>
        </recommendedName>
    </component>
</protein>
<organism>
    <name type="scientific">Cavia porcellus</name>
    <name type="common">Guinea pig</name>
    <dbReference type="NCBI Taxonomy" id="10141"/>
    <lineage>
        <taxon>Eukaryota</taxon>
        <taxon>Metazoa</taxon>
        <taxon>Chordata</taxon>
        <taxon>Craniata</taxon>
        <taxon>Vertebrata</taxon>
        <taxon>Euteleostomi</taxon>
        <taxon>Mammalia</taxon>
        <taxon>Eutheria</taxon>
        <taxon>Euarchontoglires</taxon>
        <taxon>Glires</taxon>
        <taxon>Rodentia</taxon>
        <taxon>Hystricomorpha</taxon>
        <taxon>Caviidae</taxon>
        <taxon>Cavia</taxon>
    </lineage>
</organism>
<gene>
    <name type="primary">MLN</name>
</gene>
<proteinExistence type="evidence at transcript level"/>
<feature type="signal peptide" evidence="2">
    <location>
        <begin position="1"/>
        <end position="25"/>
    </location>
</feature>
<feature type="chain" id="PRO_0000342168" description="Promotilin">
    <location>
        <begin position="26"/>
        <end position="127"/>
    </location>
</feature>
<feature type="peptide" id="PRO_0000019178" description="Motilin">
    <location>
        <begin position="26"/>
        <end position="47"/>
    </location>
</feature>
<feature type="peptide" id="PRO_0000019179" description="Motilin-associated peptide">
    <location>
        <begin position="50"/>
        <end position="127"/>
    </location>
</feature>
<feature type="region of interest" description="Disordered" evidence="3">
    <location>
        <begin position="41"/>
        <end position="67"/>
    </location>
</feature>
<keyword id="KW-0165">Cleavage on pair of basic residues</keyword>
<keyword id="KW-0372">Hormone</keyword>
<keyword id="KW-1185">Reference proteome</keyword>
<keyword id="KW-0964">Secreted</keyword>
<keyword id="KW-0732">Signal</keyword>
<name>MOTI_CAVPO</name>